<organism>
    <name type="scientific">Clostridium botulinum (strain Loch Maree / Type A3)</name>
    <dbReference type="NCBI Taxonomy" id="498214"/>
    <lineage>
        <taxon>Bacteria</taxon>
        <taxon>Bacillati</taxon>
        <taxon>Bacillota</taxon>
        <taxon>Clostridia</taxon>
        <taxon>Eubacteriales</taxon>
        <taxon>Clostridiaceae</taxon>
        <taxon>Clostridium</taxon>
    </lineage>
</organism>
<evidence type="ECO:0000255" key="1">
    <source>
        <dbReference type="HAMAP-Rule" id="MF_00318"/>
    </source>
</evidence>
<keyword id="KW-0963">Cytoplasm</keyword>
<keyword id="KW-0324">Glycolysis</keyword>
<keyword id="KW-0456">Lyase</keyword>
<keyword id="KW-0460">Magnesium</keyword>
<keyword id="KW-0479">Metal-binding</keyword>
<keyword id="KW-0964">Secreted</keyword>
<reference key="1">
    <citation type="journal article" date="2007" name="PLoS ONE">
        <title>Analysis of the neurotoxin complex genes in Clostridium botulinum A1-A4 and B1 strains: BoNT/A3, /Ba4 and /B1 clusters are located within plasmids.</title>
        <authorList>
            <person name="Smith T.J."/>
            <person name="Hill K.K."/>
            <person name="Foley B.T."/>
            <person name="Detter J.C."/>
            <person name="Munk A.C."/>
            <person name="Bruce D.C."/>
            <person name="Doggett N.A."/>
            <person name="Smith L.A."/>
            <person name="Marks J.D."/>
            <person name="Xie G."/>
            <person name="Brettin T.S."/>
        </authorList>
    </citation>
    <scope>NUCLEOTIDE SEQUENCE [LARGE SCALE GENOMIC DNA]</scope>
    <source>
        <strain>Loch Maree / Type A3</strain>
    </source>
</reference>
<comment type="function">
    <text evidence="1">Catalyzes the reversible conversion of 2-phosphoglycerate (2-PG) into phosphoenolpyruvate (PEP). It is essential for the degradation of carbohydrates via glycolysis.</text>
</comment>
<comment type="catalytic activity">
    <reaction evidence="1">
        <text>(2R)-2-phosphoglycerate = phosphoenolpyruvate + H2O</text>
        <dbReference type="Rhea" id="RHEA:10164"/>
        <dbReference type="ChEBI" id="CHEBI:15377"/>
        <dbReference type="ChEBI" id="CHEBI:58289"/>
        <dbReference type="ChEBI" id="CHEBI:58702"/>
        <dbReference type="EC" id="4.2.1.11"/>
    </reaction>
</comment>
<comment type="cofactor">
    <cofactor evidence="1">
        <name>Mg(2+)</name>
        <dbReference type="ChEBI" id="CHEBI:18420"/>
    </cofactor>
    <text evidence="1">Binds a second Mg(2+) ion via substrate during catalysis.</text>
</comment>
<comment type="pathway">
    <text evidence="1">Carbohydrate degradation; glycolysis; pyruvate from D-glyceraldehyde 3-phosphate: step 4/5.</text>
</comment>
<comment type="subcellular location">
    <subcellularLocation>
        <location evidence="1">Cytoplasm</location>
    </subcellularLocation>
    <subcellularLocation>
        <location evidence="1">Secreted</location>
    </subcellularLocation>
    <subcellularLocation>
        <location evidence="1">Cell surface</location>
    </subcellularLocation>
    <text evidence="1">Fractions of enolase are present in both the cytoplasm and on the cell surface.</text>
</comment>
<comment type="similarity">
    <text evidence="1">Belongs to the enolase family.</text>
</comment>
<gene>
    <name evidence="1" type="primary">eno</name>
    <name type="ordered locus">CLK_3412</name>
</gene>
<dbReference type="EC" id="4.2.1.11" evidence="1"/>
<dbReference type="EMBL" id="CP000962">
    <property type="protein sequence ID" value="ACA56146.1"/>
    <property type="molecule type" value="Genomic_DNA"/>
</dbReference>
<dbReference type="RefSeq" id="WP_012344047.1">
    <property type="nucleotide sequence ID" value="NC_010520.1"/>
</dbReference>
<dbReference type="SMR" id="B1KTJ8"/>
<dbReference type="KEGG" id="cbl:CLK_3412"/>
<dbReference type="HOGENOM" id="CLU_031223_2_1_9"/>
<dbReference type="UniPathway" id="UPA00109">
    <property type="reaction ID" value="UER00187"/>
</dbReference>
<dbReference type="GO" id="GO:0009986">
    <property type="term" value="C:cell surface"/>
    <property type="evidence" value="ECO:0007669"/>
    <property type="project" value="UniProtKB-SubCell"/>
</dbReference>
<dbReference type="GO" id="GO:0005576">
    <property type="term" value="C:extracellular region"/>
    <property type="evidence" value="ECO:0007669"/>
    <property type="project" value="UniProtKB-SubCell"/>
</dbReference>
<dbReference type="GO" id="GO:0000015">
    <property type="term" value="C:phosphopyruvate hydratase complex"/>
    <property type="evidence" value="ECO:0007669"/>
    <property type="project" value="InterPro"/>
</dbReference>
<dbReference type="GO" id="GO:0000287">
    <property type="term" value="F:magnesium ion binding"/>
    <property type="evidence" value="ECO:0007669"/>
    <property type="project" value="UniProtKB-UniRule"/>
</dbReference>
<dbReference type="GO" id="GO:0004634">
    <property type="term" value="F:phosphopyruvate hydratase activity"/>
    <property type="evidence" value="ECO:0007669"/>
    <property type="project" value="UniProtKB-UniRule"/>
</dbReference>
<dbReference type="GO" id="GO:0006096">
    <property type="term" value="P:glycolytic process"/>
    <property type="evidence" value="ECO:0007669"/>
    <property type="project" value="UniProtKB-UniRule"/>
</dbReference>
<dbReference type="CDD" id="cd03313">
    <property type="entry name" value="enolase"/>
    <property type="match status" value="1"/>
</dbReference>
<dbReference type="FunFam" id="3.20.20.120:FF:000001">
    <property type="entry name" value="Enolase"/>
    <property type="match status" value="1"/>
</dbReference>
<dbReference type="FunFam" id="3.30.390.10:FF:000001">
    <property type="entry name" value="Enolase"/>
    <property type="match status" value="1"/>
</dbReference>
<dbReference type="Gene3D" id="3.20.20.120">
    <property type="entry name" value="Enolase-like C-terminal domain"/>
    <property type="match status" value="1"/>
</dbReference>
<dbReference type="Gene3D" id="3.30.390.10">
    <property type="entry name" value="Enolase-like, N-terminal domain"/>
    <property type="match status" value="1"/>
</dbReference>
<dbReference type="HAMAP" id="MF_00318">
    <property type="entry name" value="Enolase"/>
    <property type="match status" value="1"/>
</dbReference>
<dbReference type="InterPro" id="IPR000941">
    <property type="entry name" value="Enolase"/>
</dbReference>
<dbReference type="InterPro" id="IPR036849">
    <property type="entry name" value="Enolase-like_C_sf"/>
</dbReference>
<dbReference type="InterPro" id="IPR029017">
    <property type="entry name" value="Enolase-like_N"/>
</dbReference>
<dbReference type="InterPro" id="IPR020810">
    <property type="entry name" value="Enolase_C"/>
</dbReference>
<dbReference type="InterPro" id="IPR020809">
    <property type="entry name" value="Enolase_CS"/>
</dbReference>
<dbReference type="InterPro" id="IPR020811">
    <property type="entry name" value="Enolase_N"/>
</dbReference>
<dbReference type="NCBIfam" id="TIGR01060">
    <property type="entry name" value="eno"/>
    <property type="match status" value="1"/>
</dbReference>
<dbReference type="PANTHER" id="PTHR11902">
    <property type="entry name" value="ENOLASE"/>
    <property type="match status" value="1"/>
</dbReference>
<dbReference type="PANTHER" id="PTHR11902:SF1">
    <property type="entry name" value="ENOLASE"/>
    <property type="match status" value="1"/>
</dbReference>
<dbReference type="Pfam" id="PF00113">
    <property type="entry name" value="Enolase_C"/>
    <property type="match status" value="1"/>
</dbReference>
<dbReference type="Pfam" id="PF03952">
    <property type="entry name" value="Enolase_N"/>
    <property type="match status" value="1"/>
</dbReference>
<dbReference type="PIRSF" id="PIRSF001400">
    <property type="entry name" value="Enolase"/>
    <property type="match status" value="1"/>
</dbReference>
<dbReference type="PRINTS" id="PR00148">
    <property type="entry name" value="ENOLASE"/>
</dbReference>
<dbReference type="SFLD" id="SFLDS00001">
    <property type="entry name" value="Enolase"/>
    <property type="match status" value="1"/>
</dbReference>
<dbReference type="SFLD" id="SFLDF00002">
    <property type="entry name" value="enolase"/>
    <property type="match status" value="1"/>
</dbReference>
<dbReference type="SMART" id="SM01192">
    <property type="entry name" value="Enolase_C"/>
    <property type="match status" value="1"/>
</dbReference>
<dbReference type="SMART" id="SM01193">
    <property type="entry name" value="Enolase_N"/>
    <property type="match status" value="1"/>
</dbReference>
<dbReference type="SUPFAM" id="SSF51604">
    <property type="entry name" value="Enolase C-terminal domain-like"/>
    <property type="match status" value="1"/>
</dbReference>
<dbReference type="SUPFAM" id="SSF54826">
    <property type="entry name" value="Enolase N-terminal domain-like"/>
    <property type="match status" value="1"/>
</dbReference>
<dbReference type="PROSITE" id="PS00164">
    <property type="entry name" value="ENOLASE"/>
    <property type="match status" value="1"/>
</dbReference>
<proteinExistence type="inferred from homology"/>
<accession>B1KTJ8</accession>
<protein>
    <recommendedName>
        <fullName evidence="1">Enolase</fullName>
        <ecNumber evidence="1">4.2.1.11</ecNumber>
    </recommendedName>
    <alternativeName>
        <fullName evidence="1">2-phospho-D-glycerate hydro-lyase</fullName>
    </alternativeName>
    <alternativeName>
        <fullName evidence="1">2-phosphoglycerate dehydratase</fullName>
    </alternativeName>
</protein>
<feature type="chain" id="PRO_1000115852" description="Enolase">
    <location>
        <begin position="1"/>
        <end position="431"/>
    </location>
</feature>
<feature type="active site" description="Proton donor" evidence="1">
    <location>
        <position position="208"/>
    </location>
</feature>
<feature type="active site" description="Proton acceptor" evidence="1">
    <location>
        <position position="340"/>
    </location>
</feature>
<feature type="binding site" evidence="1">
    <location>
        <position position="166"/>
    </location>
    <ligand>
        <name>(2R)-2-phosphoglycerate</name>
        <dbReference type="ChEBI" id="CHEBI:58289"/>
    </ligand>
</feature>
<feature type="binding site" evidence="1">
    <location>
        <position position="245"/>
    </location>
    <ligand>
        <name>Mg(2+)</name>
        <dbReference type="ChEBI" id="CHEBI:18420"/>
    </ligand>
</feature>
<feature type="binding site" evidence="1">
    <location>
        <position position="288"/>
    </location>
    <ligand>
        <name>Mg(2+)</name>
        <dbReference type="ChEBI" id="CHEBI:18420"/>
    </ligand>
</feature>
<feature type="binding site" evidence="1">
    <location>
        <position position="315"/>
    </location>
    <ligand>
        <name>Mg(2+)</name>
        <dbReference type="ChEBI" id="CHEBI:18420"/>
    </ligand>
</feature>
<feature type="binding site" evidence="1">
    <location>
        <position position="340"/>
    </location>
    <ligand>
        <name>(2R)-2-phosphoglycerate</name>
        <dbReference type="ChEBI" id="CHEBI:58289"/>
    </ligand>
</feature>
<feature type="binding site" evidence="1">
    <location>
        <position position="369"/>
    </location>
    <ligand>
        <name>(2R)-2-phosphoglycerate</name>
        <dbReference type="ChEBI" id="CHEBI:58289"/>
    </ligand>
</feature>
<feature type="binding site" evidence="1">
    <location>
        <position position="370"/>
    </location>
    <ligand>
        <name>(2R)-2-phosphoglycerate</name>
        <dbReference type="ChEBI" id="CHEBI:58289"/>
    </ligand>
</feature>
<feature type="binding site" evidence="1">
    <location>
        <position position="391"/>
    </location>
    <ligand>
        <name>(2R)-2-phosphoglycerate</name>
        <dbReference type="ChEBI" id="CHEBI:58289"/>
    </ligand>
</feature>
<sequence>MKNYIEIVDVYARQILDSRCNPTVEVEVELEDGTVGVAAVPSGASTGAFEAVELRDGDESKYLGKGVLKAVDNVNTIIADELVGMNVLDQVAIDKTMIELDGTDNKAKLGANAMLGVSLACAKAAANFLGMSLYQYIGGVNAKVLPVPMMNIINGGKHADNNVDLQEFMIMPAGAPSFSEALRMCSEVYHALKSTLKSQGYDTGVGDEGGFAPNLKSNEEAIVVIIEAIKKAGYTPGKDIFIALDPASSEIFEDGKYNLAGEGRVLTPEEMANYYVELAEKYPIISIEDGMAEEDWDGWKILTEKIGDKVQLVGDDLFVTNTERLAKGIKLGVANSILIKLNQIGTLTETLNAIEMAERAGYTAVVSHRSGETEDTTIADLVVAVNAGQIKTGAPARSERVAKYNQLLRIEEELNDMGEYRGLKAFYNINK</sequence>
<name>ENO_CLOBM</name>